<comment type="function">
    <text evidence="1">One of the essential components for the initiation of protein synthesis. Stabilizes the binding of IF-2 and IF-3 on the 30S subunit to which N-formylmethionyl-tRNA(fMet) subsequently binds. Helps modulate mRNA selection, yielding the 30S pre-initiation complex (PIC). Upon addition of the 50S ribosomal subunit IF-1, IF-2 and IF-3 are released leaving the mature 70S translation initiation complex.</text>
</comment>
<comment type="subunit">
    <text evidence="1">Component of the 30S ribosomal translation pre-initiation complex which assembles on the 30S ribosome in the order IF-2 and IF-3, IF-1 and N-formylmethionyl-tRNA(fMet); mRNA recruitment can occur at any time during PIC assembly.</text>
</comment>
<comment type="subcellular location">
    <subcellularLocation>
        <location evidence="1">Cytoplasm</location>
    </subcellularLocation>
</comment>
<comment type="similarity">
    <text evidence="1">Belongs to the IF-1 family.</text>
</comment>
<evidence type="ECO:0000255" key="1">
    <source>
        <dbReference type="HAMAP-Rule" id="MF_00075"/>
    </source>
</evidence>
<sequence length="72" mass="8375">MSKSDYIELEGVVKEKLPNTIFTVELENGHRILAHISGKIRKHYIRILPGDKVTVEMTPYDLTKGRIIFRHK</sequence>
<organism>
    <name type="scientific">Ruthia magnifica subsp. Calyptogena magnifica</name>
    <dbReference type="NCBI Taxonomy" id="413404"/>
    <lineage>
        <taxon>Bacteria</taxon>
        <taxon>Pseudomonadati</taxon>
        <taxon>Pseudomonadota</taxon>
        <taxon>Gammaproteobacteria</taxon>
        <taxon>Candidatus Pseudothioglobaceae</taxon>
        <taxon>Candidatus Ruthturnera</taxon>
    </lineage>
</organism>
<reference key="1">
    <citation type="journal article" date="2007" name="Science">
        <title>The Calyptogena magnifica chemoautotrophic symbiont genome.</title>
        <authorList>
            <person name="Newton I.L.G."/>
            <person name="Woyke T."/>
            <person name="Auchtung T.A."/>
            <person name="Dilly G.F."/>
            <person name="Dutton R.J."/>
            <person name="Fisher M.C."/>
            <person name="Fontanez K.M."/>
            <person name="Lau E."/>
            <person name="Stewart F.J."/>
            <person name="Richardson P.M."/>
            <person name="Barry K.W."/>
            <person name="Saunders E."/>
            <person name="Detter J.C."/>
            <person name="Wu D."/>
            <person name="Eisen J.A."/>
            <person name="Cavanaugh C.M."/>
        </authorList>
    </citation>
    <scope>NUCLEOTIDE SEQUENCE [LARGE SCALE GENOMIC DNA]</scope>
</reference>
<protein>
    <recommendedName>
        <fullName evidence="1">Translation initiation factor IF-1</fullName>
    </recommendedName>
</protein>
<name>IF1_RUTMC</name>
<keyword id="KW-0963">Cytoplasm</keyword>
<keyword id="KW-0396">Initiation factor</keyword>
<keyword id="KW-0648">Protein biosynthesis</keyword>
<keyword id="KW-0694">RNA-binding</keyword>
<keyword id="KW-0699">rRNA-binding</keyword>
<accession>A1AXB0</accession>
<proteinExistence type="inferred from homology"/>
<dbReference type="EMBL" id="CP000488">
    <property type="protein sequence ID" value="ABL02567.1"/>
    <property type="molecule type" value="Genomic_DNA"/>
</dbReference>
<dbReference type="RefSeq" id="WP_011738192.1">
    <property type="nucleotide sequence ID" value="NC_008610.1"/>
</dbReference>
<dbReference type="SMR" id="A1AXB0"/>
<dbReference type="STRING" id="413404.Rmag_0850"/>
<dbReference type="KEGG" id="rma:Rmag_0850"/>
<dbReference type="eggNOG" id="COG0361">
    <property type="taxonomic scope" value="Bacteria"/>
</dbReference>
<dbReference type="HOGENOM" id="CLU_151267_1_0_6"/>
<dbReference type="OrthoDB" id="9803250at2"/>
<dbReference type="Proteomes" id="UP000002587">
    <property type="component" value="Chromosome"/>
</dbReference>
<dbReference type="GO" id="GO:0005829">
    <property type="term" value="C:cytosol"/>
    <property type="evidence" value="ECO:0007669"/>
    <property type="project" value="TreeGrafter"/>
</dbReference>
<dbReference type="GO" id="GO:0043022">
    <property type="term" value="F:ribosome binding"/>
    <property type="evidence" value="ECO:0007669"/>
    <property type="project" value="UniProtKB-UniRule"/>
</dbReference>
<dbReference type="GO" id="GO:0019843">
    <property type="term" value="F:rRNA binding"/>
    <property type="evidence" value="ECO:0007669"/>
    <property type="project" value="UniProtKB-UniRule"/>
</dbReference>
<dbReference type="GO" id="GO:0003743">
    <property type="term" value="F:translation initiation factor activity"/>
    <property type="evidence" value="ECO:0007669"/>
    <property type="project" value="UniProtKB-UniRule"/>
</dbReference>
<dbReference type="CDD" id="cd04451">
    <property type="entry name" value="S1_IF1"/>
    <property type="match status" value="1"/>
</dbReference>
<dbReference type="FunFam" id="2.40.50.140:FF:000002">
    <property type="entry name" value="Translation initiation factor IF-1"/>
    <property type="match status" value="1"/>
</dbReference>
<dbReference type="Gene3D" id="2.40.50.140">
    <property type="entry name" value="Nucleic acid-binding proteins"/>
    <property type="match status" value="1"/>
</dbReference>
<dbReference type="HAMAP" id="MF_00075">
    <property type="entry name" value="IF_1"/>
    <property type="match status" value="1"/>
</dbReference>
<dbReference type="InterPro" id="IPR012340">
    <property type="entry name" value="NA-bd_OB-fold"/>
</dbReference>
<dbReference type="InterPro" id="IPR006196">
    <property type="entry name" value="RNA-binding_domain_S1_IF1"/>
</dbReference>
<dbReference type="InterPro" id="IPR003029">
    <property type="entry name" value="S1_domain"/>
</dbReference>
<dbReference type="InterPro" id="IPR004368">
    <property type="entry name" value="TIF_IF1"/>
</dbReference>
<dbReference type="NCBIfam" id="TIGR00008">
    <property type="entry name" value="infA"/>
    <property type="match status" value="1"/>
</dbReference>
<dbReference type="PANTHER" id="PTHR33370">
    <property type="entry name" value="TRANSLATION INITIATION FACTOR IF-1, CHLOROPLASTIC"/>
    <property type="match status" value="1"/>
</dbReference>
<dbReference type="PANTHER" id="PTHR33370:SF1">
    <property type="entry name" value="TRANSLATION INITIATION FACTOR IF-1, CHLOROPLASTIC"/>
    <property type="match status" value="1"/>
</dbReference>
<dbReference type="Pfam" id="PF01176">
    <property type="entry name" value="eIF-1a"/>
    <property type="match status" value="1"/>
</dbReference>
<dbReference type="SMART" id="SM00316">
    <property type="entry name" value="S1"/>
    <property type="match status" value="1"/>
</dbReference>
<dbReference type="SUPFAM" id="SSF50249">
    <property type="entry name" value="Nucleic acid-binding proteins"/>
    <property type="match status" value="1"/>
</dbReference>
<dbReference type="PROSITE" id="PS50832">
    <property type="entry name" value="S1_IF1_TYPE"/>
    <property type="match status" value="1"/>
</dbReference>
<feature type="chain" id="PRO_0000338910" description="Translation initiation factor IF-1">
    <location>
        <begin position="1"/>
        <end position="72"/>
    </location>
</feature>
<feature type="domain" description="S1-like" evidence="1">
    <location>
        <begin position="1"/>
        <end position="72"/>
    </location>
</feature>
<gene>
    <name evidence="1" type="primary">infA</name>
    <name type="ordered locus">Rmag_0850</name>
</gene>